<comment type="function">
    <text evidence="1">Catalyzes the conversion of 4-hydroxy-tetrahydrodipicolinate (HTPA) to tetrahydrodipicolinate.</text>
</comment>
<comment type="catalytic activity">
    <reaction evidence="1">
        <text>(S)-2,3,4,5-tetrahydrodipicolinate + NAD(+) + H2O = (2S,4S)-4-hydroxy-2,3,4,5-tetrahydrodipicolinate + NADH + H(+)</text>
        <dbReference type="Rhea" id="RHEA:35323"/>
        <dbReference type="ChEBI" id="CHEBI:15377"/>
        <dbReference type="ChEBI" id="CHEBI:15378"/>
        <dbReference type="ChEBI" id="CHEBI:16845"/>
        <dbReference type="ChEBI" id="CHEBI:57540"/>
        <dbReference type="ChEBI" id="CHEBI:57945"/>
        <dbReference type="ChEBI" id="CHEBI:67139"/>
        <dbReference type="EC" id="1.17.1.8"/>
    </reaction>
</comment>
<comment type="catalytic activity">
    <reaction evidence="1">
        <text>(S)-2,3,4,5-tetrahydrodipicolinate + NADP(+) + H2O = (2S,4S)-4-hydroxy-2,3,4,5-tetrahydrodipicolinate + NADPH + H(+)</text>
        <dbReference type="Rhea" id="RHEA:35331"/>
        <dbReference type="ChEBI" id="CHEBI:15377"/>
        <dbReference type="ChEBI" id="CHEBI:15378"/>
        <dbReference type="ChEBI" id="CHEBI:16845"/>
        <dbReference type="ChEBI" id="CHEBI:57783"/>
        <dbReference type="ChEBI" id="CHEBI:58349"/>
        <dbReference type="ChEBI" id="CHEBI:67139"/>
        <dbReference type="EC" id="1.17.1.8"/>
    </reaction>
</comment>
<comment type="pathway">
    <text evidence="1">Amino-acid biosynthesis; L-lysine biosynthesis via DAP pathway; (S)-tetrahydrodipicolinate from L-aspartate: step 4/4.</text>
</comment>
<comment type="subcellular location">
    <subcellularLocation>
        <location evidence="1">Cytoplasm</location>
    </subcellularLocation>
</comment>
<comment type="similarity">
    <text evidence="1">Belongs to the DapB family.</text>
</comment>
<comment type="caution">
    <text evidence="2">Was originally thought to be a dihydrodipicolinate reductase (DHDPR), catalyzing the conversion of dihydrodipicolinate to tetrahydrodipicolinate. However, it was shown in E.coli that the substrate of the enzymatic reaction is not dihydrodipicolinate (DHDP) but in fact (2S,4S)-4-hydroxy-2,3,4,5-tetrahydrodipicolinic acid (HTPA), the product released by the DapA-catalyzed reaction.</text>
</comment>
<name>DAPB_CAMJ8</name>
<protein>
    <recommendedName>
        <fullName evidence="1">4-hydroxy-tetrahydrodipicolinate reductase</fullName>
        <shortName evidence="1">HTPA reductase</shortName>
        <ecNumber evidence="1">1.17.1.8</ecNumber>
    </recommendedName>
</protein>
<accession>A8FJZ8</accession>
<reference key="1">
    <citation type="journal article" date="2007" name="J. Bacteriol.">
        <title>The complete genome sequence of Campylobacter jejuni strain 81116 (NCTC11828).</title>
        <authorList>
            <person name="Pearson B.M."/>
            <person name="Gaskin D.J.H."/>
            <person name="Segers R.P.A.M."/>
            <person name="Wells J.M."/>
            <person name="Nuijten P.J.M."/>
            <person name="van Vliet A.H.M."/>
        </authorList>
    </citation>
    <scope>NUCLEOTIDE SEQUENCE [LARGE SCALE GENOMIC DNA]</scope>
    <source>
        <strain>81116 / NCTC 11828</strain>
    </source>
</reference>
<gene>
    <name evidence="1" type="primary">dapB</name>
    <name type="ordered locus">C8J_0186</name>
</gene>
<evidence type="ECO:0000255" key="1">
    <source>
        <dbReference type="HAMAP-Rule" id="MF_00102"/>
    </source>
</evidence>
<evidence type="ECO:0000305" key="2"/>
<dbReference type="EC" id="1.17.1.8" evidence="1"/>
<dbReference type="EMBL" id="CP000814">
    <property type="protein sequence ID" value="ABV51785.1"/>
    <property type="molecule type" value="Genomic_DNA"/>
</dbReference>
<dbReference type="RefSeq" id="WP_002854461.1">
    <property type="nucleotide sequence ID" value="NC_009839.1"/>
</dbReference>
<dbReference type="SMR" id="A8FJZ8"/>
<dbReference type="KEGG" id="cju:C8J_0186"/>
<dbReference type="HOGENOM" id="CLU_047479_2_2_7"/>
<dbReference type="UniPathway" id="UPA00034">
    <property type="reaction ID" value="UER00018"/>
</dbReference>
<dbReference type="GO" id="GO:0005829">
    <property type="term" value="C:cytosol"/>
    <property type="evidence" value="ECO:0007669"/>
    <property type="project" value="TreeGrafter"/>
</dbReference>
<dbReference type="GO" id="GO:0008839">
    <property type="term" value="F:4-hydroxy-tetrahydrodipicolinate reductase"/>
    <property type="evidence" value="ECO:0007669"/>
    <property type="project" value="UniProtKB-EC"/>
</dbReference>
<dbReference type="GO" id="GO:0051287">
    <property type="term" value="F:NAD binding"/>
    <property type="evidence" value="ECO:0007669"/>
    <property type="project" value="UniProtKB-UniRule"/>
</dbReference>
<dbReference type="GO" id="GO:0050661">
    <property type="term" value="F:NADP binding"/>
    <property type="evidence" value="ECO:0007669"/>
    <property type="project" value="UniProtKB-UniRule"/>
</dbReference>
<dbReference type="GO" id="GO:0016726">
    <property type="term" value="F:oxidoreductase activity, acting on CH or CH2 groups, NAD or NADP as acceptor"/>
    <property type="evidence" value="ECO:0007669"/>
    <property type="project" value="UniProtKB-UniRule"/>
</dbReference>
<dbReference type="GO" id="GO:0019877">
    <property type="term" value="P:diaminopimelate biosynthetic process"/>
    <property type="evidence" value="ECO:0007669"/>
    <property type="project" value="UniProtKB-UniRule"/>
</dbReference>
<dbReference type="GO" id="GO:0009089">
    <property type="term" value="P:lysine biosynthetic process via diaminopimelate"/>
    <property type="evidence" value="ECO:0007669"/>
    <property type="project" value="UniProtKB-UniRule"/>
</dbReference>
<dbReference type="CDD" id="cd02274">
    <property type="entry name" value="DHDPR_N"/>
    <property type="match status" value="1"/>
</dbReference>
<dbReference type="FunFam" id="3.30.360.10:FF:000004">
    <property type="entry name" value="4-hydroxy-tetrahydrodipicolinate reductase"/>
    <property type="match status" value="1"/>
</dbReference>
<dbReference type="Gene3D" id="3.30.360.10">
    <property type="entry name" value="Dihydrodipicolinate Reductase, domain 2"/>
    <property type="match status" value="1"/>
</dbReference>
<dbReference type="Gene3D" id="3.40.50.720">
    <property type="entry name" value="NAD(P)-binding Rossmann-like Domain"/>
    <property type="match status" value="1"/>
</dbReference>
<dbReference type="HAMAP" id="MF_00102">
    <property type="entry name" value="DapB"/>
    <property type="match status" value="1"/>
</dbReference>
<dbReference type="InterPro" id="IPR022663">
    <property type="entry name" value="DapB_C"/>
</dbReference>
<dbReference type="InterPro" id="IPR000846">
    <property type="entry name" value="DapB_N"/>
</dbReference>
<dbReference type="InterPro" id="IPR022664">
    <property type="entry name" value="DapB_N_CS"/>
</dbReference>
<dbReference type="InterPro" id="IPR023940">
    <property type="entry name" value="DHDPR_bac"/>
</dbReference>
<dbReference type="InterPro" id="IPR036291">
    <property type="entry name" value="NAD(P)-bd_dom_sf"/>
</dbReference>
<dbReference type="NCBIfam" id="TIGR00036">
    <property type="entry name" value="dapB"/>
    <property type="match status" value="1"/>
</dbReference>
<dbReference type="PANTHER" id="PTHR20836:SF0">
    <property type="entry name" value="4-HYDROXY-TETRAHYDRODIPICOLINATE REDUCTASE 1, CHLOROPLASTIC-RELATED"/>
    <property type="match status" value="1"/>
</dbReference>
<dbReference type="PANTHER" id="PTHR20836">
    <property type="entry name" value="DIHYDRODIPICOLINATE REDUCTASE"/>
    <property type="match status" value="1"/>
</dbReference>
<dbReference type="Pfam" id="PF05173">
    <property type="entry name" value="DapB_C"/>
    <property type="match status" value="1"/>
</dbReference>
<dbReference type="Pfam" id="PF01113">
    <property type="entry name" value="DapB_N"/>
    <property type="match status" value="1"/>
</dbReference>
<dbReference type="PIRSF" id="PIRSF000161">
    <property type="entry name" value="DHPR"/>
    <property type="match status" value="1"/>
</dbReference>
<dbReference type="SUPFAM" id="SSF55347">
    <property type="entry name" value="Glyceraldehyde-3-phosphate dehydrogenase-like, C-terminal domain"/>
    <property type="match status" value="1"/>
</dbReference>
<dbReference type="SUPFAM" id="SSF51735">
    <property type="entry name" value="NAD(P)-binding Rossmann-fold domains"/>
    <property type="match status" value="1"/>
</dbReference>
<dbReference type="PROSITE" id="PS01298">
    <property type="entry name" value="DAPB"/>
    <property type="match status" value="1"/>
</dbReference>
<keyword id="KW-0028">Amino-acid biosynthesis</keyword>
<keyword id="KW-0963">Cytoplasm</keyword>
<keyword id="KW-0220">Diaminopimelate biosynthesis</keyword>
<keyword id="KW-0457">Lysine biosynthesis</keyword>
<keyword id="KW-0520">NAD</keyword>
<keyword id="KW-0521">NADP</keyword>
<keyword id="KW-0560">Oxidoreductase</keyword>
<organism>
    <name type="scientific">Campylobacter jejuni subsp. jejuni serotype O:6 (strain 81116 / NCTC 11828)</name>
    <dbReference type="NCBI Taxonomy" id="407148"/>
    <lineage>
        <taxon>Bacteria</taxon>
        <taxon>Pseudomonadati</taxon>
        <taxon>Campylobacterota</taxon>
        <taxon>Epsilonproteobacteria</taxon>
        <taxon>Campylobacterales</taxon>
        <taxon>Campylobacteraceae</taxon>
        <taxon>Campylobacter</taxon>
    </lineage>
</organism>
<proteinExistence type="inferred from homology"/>
<feature type="chain" id="PRO_1000071302" description="4-hydroxy-tetrahydrodipicolinate reductase">
    <location>
        <begin position="1"/>
        <end position="242"/>
    </location>
</feature>
<feature type="active site" description="Proton donor/acceptor" evidence="1">
    <location>
        <position position="131"/>
    </location>
</feature>
<feature type="active site" description="Proton donor" evidence="1">
    <location>
        <position position="135"/>
    </location>
</feature>
<feature type="binding site" evidence="1">
    <location>
        <begin position="8"/>
        <end position="13"/>
    </location>
    <ligand>
        <name>NAD(+)</name>
        <dbReference type="ChEBI" id="CHEBI:57540"/>
    </ligand>
</feature>
<feature type="binding site" evidence="1">
    <location>
        <begin position="75"/>
        <end position="77"/>
    </location>
    <ligand>
        <name>NAD(+)</name>
        <dbReference type="ChEBI" id="CHEBI:57540"/>
    </ligand>
</feature>
<feature type="binding site" evidence="1">
    <location>
        <begin position="99"/>
        <end position="102"/>
    </location>
    <ligand>
        <name>NAD(+)</name>
        <dbReference type="ChEBI" id="CHEBI:57540"/>
    </ligand>
</feature>
<feature type="binding site" evidence="1">
    <location>
        <position position="132"/>
    </location>
    <ligand>
        <name>(S)-2,3,4,5-tetrahydrodipicolinate</name>
        <dbReference type="ChEBI" id="CHEBI:16845"/>
    </ligand>
</feature>
<feature type="binding site" evidence="1">
    <location>
        <begin position="141"/>
        <end position="142"/>
    </location>
    <ligand>
        <name>(S)-2,3,4,5-tetrahydrodipicolinate</name>
        <dbReference type="ChEBI" id="CHEBI:16845"/>
    </ligand>
</feature>
<sequence length="242" mass="26712">MIKIGIYGAKGRMGKQIEECLKSETQAQISILYDKGGNLEELFEKSDVIIDFSSPSGTHELLNYARTMPKPLVIGTTGLDEKILHLMQSASEVMPIFYATNMSLGVAVLNYLASKASQMLKNFDIEILEMHHRHKKDAPSGTAMTLAQSVAKARNLELEKVRVSGRDGIIGERSKDEIAVMSLRGGDIVGRHTVGFYEDGEFLELNHTATSRATFAKGAIKIAIWLSKQEAKMYSINDFLGI</sequence>